<organism>
    <name type="scientific">Homo sapiens</name>
    <name type="common">Human</name>
    <dbReference type="NCBI Taxonomy" id="9606"/>
    <lineage>
        <taxon>Eukaryota</taxon>
        <taxon>Metazoa</taxon>
        <taxon>Chordata</taxon>
        <taxon>Craniata</taxon>
        <taxon>Vertebrata</taxon>
        <taxon>Euteleostomi</taxon>
        <taxon>Mammalia</taxon>
        <taxon>Eutheria</taxon>
        <taxon>Euarchontoglires</taxon>
        <taxon>Primates</taxon>
        <taxon>Haplorrhini</taxon>
        <taxon>Catarrhini</taxon>
        <taxon>Hominidae</taxon>
        <taxon>Homo</taxon>
    </lineage>
</organism>
<accession>P61619</accession>
<accession>P38378</accession>
<accession>P57726</accession>
<accession>Q5JPF8</accession>
<accession>Q8N0Z4</accession>
<accession>Q8N3U3</accession>
<accession>Q8NC71</accession>
<accession>Q9BU16</accession>
<accession>Q9Y2R3</accession>
<keyword id="KW-0002">3D-structure</keyword>
<keyword id="KW-0025">Alternative splicing</keyword>
<keyword id="KW-0143">Chaperone</keyword>
<keyword id="KW-0225">Disease variant</keyword>
<keyword id="KW-0256">Endoplasmic reticulum</keyword>
<keyword id="KW-0472">Membrane</keyword>
<keyword id="KW-0653">Protein transport</keyword>
<keyword id="KW-1267">Proteomics identification</keyword>
<keyword id="KW-1185">Reference proteome</keyword>
<keyword id="KW-0811">Translocation</keyword>
<keyword id="KW-0812">Transmembrane</keyword>
<keyword id="KW-1133">Transmembrane helix</keyword>
<keyword id="KW-0813">Transport</keyword>
<comment type="function">
    <text evidence="1 3 4 6 7 9 10 12 14">Component of SEC61 channel-forming translocon complex that mediates transport of signal peptide-containing precursor polypeptides across the endoplasmic reticulum (ER) (PubMed:12475939, PubMed:22375059, PubMed:28782633, PubMed:29719251, PubMed:32814900). Forms a ribosome receptor and a gated pore in the ER membrane, both functions required for cotranslational translocation of nascent polypeptides (PubMed:22375059, PubMed:28782633, PubMed:29719251). May cooperate with auxiliary protein SEC62, SEC63 and HSPA5/BiP to enable post-translational transport of small presecretory proteins (PubMed:22375059, PubMed:29719251). The SEC61 channel is also involved in ER membrane insertion of transmembrane proteins: it mediates membrane insertion of the first few transmembrane segments of proteins, while insertion of subsequent transmembrane regions of multi-pass membrane proteins is mediated by the multi-pass translocon (MPT) complex (PubMed:32820719, PubMed:36261522). The SEC61 channel cooperates with the translocating protein TRAM1 to import nascent proteins into the ER (PubMed:8616892). Controls the passive efflux of calcium ions from the ER lumen to the cytosol through SEC61 channel, contributing to the maintenance of cellular calcium homeostasis (PubMed:28782633). Plays a critical role in nephrogenesis, specifically at pronephros stage (By similarity).</text>
</comment>
<comment type="subunit">
    <text evidence="10 12 13">The SEC61 channel-forming translocon complex consists of channel-forming core components SEC61A1, SEC61B and SEC61G and different auxiliary components such as SEC62 and SEC63 (PubMed:36697828). The SEC61 channel associates with the multi-pass translocon (MPT) complex (PubMed:32820719, PubMed:36261522).</text>
</comment>
<comment type="interaction">
    <interactant intactId="EBI-358919">
        <id>P61619</id>
    </interactant>
    <interactant intactId="EBI-355947">
        <id>P27824</id>
        <label>CANX</label>
    </interactant>
    <organismsDiffer>false</organismsDiffer>
    <experiments>5</experiments>
</comment>
<comment type="interaction">
    <interactant intactId="EBI-358919">
        <id>P61619</id>
    </interactant>
    <interactant intactId="EBI-297353">
        <id>P00533</id>
        <label>EGFR</label>
    </interactant>
    <organismsDiffer>false</organismsDiffer>
    <experiments>2</experiments>
</comment>
<comment type="interaction">
    <interactant intactId="EBI-358919">
        <id>P61619</id>
    </interactant>
    <interactant intactId="EBI-354921">
        <id>P11021</id>
        <label>HSPA5</label>
    </interactant>
    <organismsDiffer>false</organismsDiffer>
    <experiments>3</experiments>
</comment>
<comment type="interaction">
    <interactant intactId="EBI-358919">
        <id>P61619</id>
    </interactant>
    <interactant intactId="EBI-3936704">
        <id>Q16288</id>
        <label>NTRK3</label>
    </interactant>
    <organismsDiffer>false</organismsDiffer>
    <experiments>2</experiments>
</comment>
<comment type="subcellular location">
    <subcellularLocation>
        <location evidence="3 5 8 9 12 14">Endoplasmic reticulum membrane</location>
        <topology evidence="16">Multi-pass membrane protein</topology>
    </subcellularLocation>
    <text evidence="5">Localizes exclusively in granular structures in the endoplasmic reticulum (ER).</text>
</comment>
<comment type="alternative products">
    <event type="alternative splicing"/>
    <isoform>
        <id>P61619-1</id>
        <name>1</name>
        <sequence type="displayed"/>
    </isoform>
    <isoform>
        <id>P61619-3</id>
        <name>3</name>
        <sequence type="described" ref="VSP_013747"/>
    </isoform>
</comment>
<comment type="tissue specificity">
    <text evidence="6">Expressed in proximal and distal tubules in kidney (at protein level).</text>
</comment>
<comment type="disease" evidence="5 11">
    <disease id="DI-04780">
        <name>Tubulointerstitial kidney disease, autosomal dominant 5</name>
        <acronym>ADTKD5</acronym>
        <description>A form of autosomal dominant tubulointerstitial kidney disease, a genetically heterogeneous disorder characterized by slowly progressive loss of kidney function, bland urinary sediment, hyperuricemia, absent or mildly increased albuminuria, lack of severe hypertension during the early stages, and normal or small kidneys on ultrasound. Renal histology shows variable abnormalities including interstitial fibrosis with tubular atrophy, microcystic dilatation of the tubules, thickening of tubular basement membranes, medullary cysts, and secondary glomerulosclerotic or glomerulocystic changes with abnormal glomerular tufting. There is significant variability, as well as incomplete penetrance.</description>
        <dbReference type="MIM" id="617056"/>
    </disease>
    <text>The disease is caused by variants affecting the gene represented in this entry.</text>
</comment>
<comment type="disease" evidence="6">
    <disease id="DI-06822">
        <name>Immunodeficiency, common variable, 15</name>
        <acronym>CVID15</acronym>
        <description>An autosomal dominant immunologic disorder resulting in recurrent severe infections since early childhood or infancy, and characterized by hypogammaglobulinemia with antibody deficiencies of IgM, IgG, and IgA due to impaired plasma cell homeostasis, although other B cell subset numbers are normal. T and NK cells are also normal. CVID15 inheritance is autosomal dominant.</description>
        <dbReference type="MIM" id="620670"/>
    </disease>
    <text>The disease is caused by variants affecting the gene represented in this entry.</text>
</comment>
<comment type="disease" evidence="8">
    <disease id="DI-06823">
        <name>Neutropenia, severe congenital, 11, autosomal dominant</name>
        <acronym>SCN11</acronym>
        <description>A form of severe congenital neutropenia, a disorder of hematopoiesis characterized by maturation arrest of granulopoiesis at the level of promyelocytes with peripheral blood absolute neutrophil counts below 0.5 x 10(9)/l, and early onset of severe bacterial infections. SCN11 is characterized by the onset of recurrent infections, mainly bacterial, in early childhood.</description>
        <dbReference type="MIM" id="620674"/>
    </disease>
    <text>The disease may be caused by variants affecting the gene represented in this entry.</text>
</comment>
<comment type="similarity">
    <text evidence="16">Belongs to the SecY/SEC61-alpha family.</text>
</comment>
<comment type="sequence caution" evidence="16">
    <conflict type="erroneous initiation">
        <sequence resource="EMBL-CDS" id="BAC11283"/>
    </conflict>
</comment>
<comment type="sequence caution" evidence="16">
    <conflict type="erroneous initiation">
        <sequence resource="EMBL-CDS" id="BAC11434"/>
    </conflict>
</comment>
<sequence>MAIKFLEVIKPFCVILPEIQKPERKIQFKEKVLWTAITLFIFLVCCQIPLFGIMSSDSADPFYWMRVILASNRGTLMELGISPIVTSGLIMQLLAGAKIIEVGDTPKDRALFNGAQKLFGMIITIGQSIVYVMTGMYGDPSEMGAGICLLITIQLFVAGLIVLLLDELLQKGYGLGSGISLFIATNICETIVWKAFSPTTVNTGRGMEFEGAIIALFHLLATRTDKVRALREAFYRQNLPNLMNLIATIFVFAVVIYFQGFRVDLPIKSARYRGQYNTYPIKLFYTSNIPIILQSALVSNLYVISQMLSARFSGNLLVSLLGTWSDTSSGGPARAYPVGGLCYYLSPPESFGSVLEDPVHAVVYIVFMLGSCAFFSKTWIEVSGSSAKDVAKQLKEQQMVMRGHRETSMVHELNRYIPTAAAFGGLCIGALSVLADFLGAIGSGTGILLAVTIIYQYFEIFVKEQSEVGSMGALLF</sequence>
<feature type="chain" id="PRO_0000131791" description="Protein transport protein Sec61 subunit alpha isoform 1">
    <location>
        <begin position="1"/>
        <end position="476"/>
    </location>
</feature>
<feature type="topological domain" description="Cytoplasmic" evidence="2">
    <location>
        <begin position="1"/>
        <end position="33"/>
    </location>
</feature>
<feature type="transmembrane region" description="Helical" evidence="2">
    <location>
        <begin position="34"/>
        <end position="53"/>
    </location>
</feature>
<feature type="topological domain" description="Lumenal" evidence="2">
    <location>
        <begin position="54"/>
        <end position="76"/>
    </location>
</feature>
<feature type="transmembrane region" description="Helical" evidence="2">
    <location>
        <begin position="77"/>
        <end position="96"/>
    </location>
</feature>
<feature type="topological domain" description="Cytoplasmic" evidence="2">
    <location>
        <begin position="97"/>
        <end position="117"/>
    </location>
</feature>
<feature type="transmembrane region" description="Helical" evidence="2">
    <location>
        <begin position="118"/>
        <end position="138"/>
    </location>
</feature>
<feature type="topological domain" description="Lumenal" evidence="2">
    <location>
        <begin position="139"/>
        <end position="144"/>
    </location>
</feature>
<feature type="transmembrane region" description="Helical" evidence="2">
    <location>
        <begin position="145"/>
        <end position="165"/>
    </location>
</feature>
<feature type="topological domain" description="Cytoplasmic" evidence="2">
    <location>
        <begin position="166"/>
        <end position="172"/>
    </location>
</feature>
<feature type="transmembrane region" description="Helical" evidence="2">
    <location>
        <begin position="173"/>
        <end position="193"/>
    </location>
</feature>
<feature type="topological domain" description="Lumenal" evidence="2">
    <location>
        <begin position="194"/>
        <end position="240"/>
    </location>
</feature>
<feature type="transmembrane region" description="Helical" evidence="2">
    <location>
        <begin position="241"/>
        <end position="261"/>
    </location>
</feature>
<feature type="topological domain" description="Cytoplasmic" evidence="2">
    <location>
        <begin position="262"/>
        <end position="288"/>
    </location>
</feature>
<feature type="transmembrane region" description="Helical" evidence="2">
    <location>
        <begin position="289"/>
        <end position="309"/>
    </location>
</feature>
<feature type="topological domain" description="Lumenal" evidence="2">
    <location>
        <begin position="310"/>
        <end position="354"/>
    </location>
</feature>
<feature type="transmembrane region" description="Helical" evidence="2">
    <location>
        <begin position="355"/>
        <end position="375"/>
    </location>
</feature>
<feature type="topological domain" description="Cytoplasmic" evidence="2">
    <location>
        <begin position="376"/>
        <end position="420"/>
    </location>
</feature>
<feature type="transmembrane region" description="Helical" evidence="2">
    <location>
        <begin position="421"/>
        <end position="441"/>
    </location>
</feature>
<feature type="topological domain" description="Lumenal" evidence="2">
    <location>
        <begin position="442"/>
        <end position="445"/>
    </location>
</feature>
<feature type="transmembrane region" description="Helical" evidence="2">
    <location>
        <begin position="446"/>
        <end position="462"/>
    </location>
</feature>
<feature type="topological domain" description="Cytoplasmic" evidence="2">
    <location>
        <begin position="463"/>
        <end position="476"/>
    </location>
</feature>
<feature type="splice variant" id="VSP_013747" description="In isoform 3." evidence="15">
    <location>
        <begin position="1"/>
        <end position="120"/>
    </location>
</feature>
<feature type="sequence variant" id="VAR_077059" description="In ADTKD5; decreases in protein stability; partly confers novel Golgi subcellular location; dbSNP:rs752745051." evidence="5">
    <original>V</original>
    <variation>G</variation>
    <location>
        <position position="67"/>
    </location>
</feature>
<feature type="sequence variant" id="VAR_080231" description="In CVID15; likely pathogenic; decreased function in cotranslational protein targeting to endoplasmic reticulum; dbSNP:rs1553721236." evidence="6">
    <original>V</original>
    <variation>D</variation>
    <location>
        <position position="85"/>
    </location>
</feature>
<feature type="sequence variant" id="VAR_089209" description="In SCN11; likely pathogenic; reduced protein abundance in patient cells; contrary to the wild type, it localizes to the Golgi apparatus; localizes to the endoplasmic reticulum." evidence="8">
    <original>Q</original>
    <variation>R</variation>
    <location>
        <position position="92"/>
    </location>
</feature>
<feature type="sequence variant" id="VAR_077060" description="In ADTKD5; likely pathogenic; decreases in protein stability; partly confers novel Golgi subcellular location; dbSNP:rs879255648." evidence="5 11">
    <original>T</original>
    <variation>A</variation>
    <location>
        <position position="185"/>
    </location>
</feature>
<feature type="sequence variant" id="VAR_089210" description="In CVID15; likely pathogenic." evidence="6">
    <location>
        <begin position="381"/>
        <end position="476"/>
    </location>
</feature>
<feature type="mutagenesis site" description="Reduces cotranslational translocation of APLN precursor/preproapelin." evidence="7">
    <original>Y</original>
    <variation>H</variation>
    <location>
        <position position="344"/>
    </location>
</feature>
<feature type="sequence conflict" description="In Ref. 1; AAD27765." evidence="16" ref="1">
    <original>G</original>
    <variation>W</variation>
    <location>
        <position position="135"/>
    </location>
</feature>
<feature type="sequence conflict" description="In Ref. 4; BAC11298." evidence="16" ref="4">
    <original>F</original>
    <variation>L</variation>
    <location>
        <position position="234"/>
    </location>
</feature>
<feature type="sequence conflict" description="In Ref. 1; AAD27765." evidence="16" ref="1">
    <original>T</original>
    <variation>S</variation>
    <location>
        <position position="278"/>
    </location>
</feature>
<feature type="sequence conflict" description="In Ref. 1; AAD27765." evidence="16" ref="1">
    <original>A</original>
    <variation>V</variation>
    <location>
        <position position="310"/>
    </location>
</feature>
<feature type="sequence conflict" description="In Ref. 1; AAD27765." evidence="16" ref="1">
    <original>L</original>
    <variation>F</variation>
    <location>
        <position position="316"/>
    </location>
</feature>
<feature type="sequence conflict" description="In Ref. 1; AAD27765." evidence="16" ref="1">
    <original>S</original>
    <variation>N</variation>
    <location>
        <position position="319"/>
    </location>
</feature>
<feature type="sequence conflict" description="In Ref. 1; AAD27765." evidence="16" ref="1">
    <original>TWSDTSS</original>
    <variation>QWADVSG</variation>
    <location>
        <begin position="323"/>
        <end position="329"/>
    </location>
</feature>
<feature type="sequence conflict" description="In Ref. 1; AAD27765." evidence="16" ref="1">
    <original>A</original>
    <variation>S</variation>
    <location>
        <position position="335"/>
    </location>
</feature>
<feature type="sequence conflict" description="In Ref. 1; AAD27765." evidence="16" ref="1">
    <original>FGSVL</original>
    <variation>MGAIF</variation>
    <location>
        <begin position="351"/>
        <end position="355"/>
    </location>
</feature>
<feature type="helix" evidence="21">
    <location>
        <begin position="5"/>
        <end position="8"/>
    </location>
</feature>
<feature type="helix" evidence="21">
    <location>
        <begin position="10"/>
        <end position="13"/>
    </location>
</feature>
<feature type="strand" evidence="23">
    <location>
        <begin position="14"/>
        <end position="16"/>
    </location>
</feature>
<feature type="helix" evidence="21">
    <location>
        <begin position="28"/>
        <end position="45"/>
    </location>
</feature>
<feature type="strand" evidence="19">
    <location>
        <begin position="47"/>
        <end position="49"/>
    </location>
</feature>
<feature type="helix" evidence="21">
    <location>
        <begin position="63"/>
        <end position="65"/>
    </location>
</feature>
<feature type="turn" evidence="21">
    <location>
        <begin position="66"/>
        <end position="70"/>
    </location>
</feature>
<feature type="helix" evidence="24">
    <location>
        <begin position="76"/>
        <end position="78"/>
    </location>
</feature>
<feature type="helix" evidence="21">
    <location>
        <begin position="82"/>
        <end position="96"/>
    </location>
</feature>
<feature type="helix" evidence="21">
    <location>
        <begin position="106"/>
        <end position="133"/>
    </location>
</feature>
<feature type="turn" evidence="21">
    <location>
        <begin position="134"/>
        <end position="137"/>
    </location>
</feature>
<feature type="helix" evidence="21">
    <location>
        <begin position="140"/>
        <end position="143"/>
    </location>
</feature>
<feature type="helix" evidence="21">
    <location>
        <begin position="145"/>
        <end position="170"/>
    </location>
</feature>
<feature type="turn" evidence="21">
    <location>
        <begin position="171"/>
        <end position="173"/>
    </location>
</feature>
<feature type="strand" evidence="21">
    <location>
        <begin position="174"/>
        <end position="176"/>
    </location>
</feature>
<feature type="helix" evidence="21">
    <location>
        <begin position="178"/>
        <end position="196"/>
    </location>
</feature>
<feature type="strand" evidence="21">
    <location>
        <begin position="200"/>
        <end position="205"/>
    </location>
</feature>
<feature type="strand" evidence="21">
    <location>
        <begin position="207"/>
        <end position="211"/>
    </location>
</feature>
<feature type="helix" evidence="21">
    <location>
        <begin position="212"/>
        <end position="222"/>
    </location>
</feature>
<feature type="turn" evidence="18">
    <location>
        <begin position="223"/>
        <end position="225"/>
    </location>
</feature>
<feature type="helix" evidence="21">
    <location>
        <begin position="227"/>
        <end position="234"/>
    </location>
</feature>
<feature type="strand" evidence="21">
    <location>
        <begin position="237"/>
        <end position="239"/>
    </location>
</feature>
<feature type="helix" evidence="21">
    <location>
        <begin position="242"/>
        <end position="259"/>
    </location>
</feature>
<feature type="strand" evidence="21">
    <location>
        <begin position="262"/>
        <end position="272"/>
    </location>
</feature>
<feature type="strand" evidence="21">
    <location>
        <begin position="276"/>
        <end position="288"/>
    </location>
</feature>
<feature type="helix" evidence="21">
    <location>
        <begin position="289"/>
        <end position="311"/>
    </location>
</feature>
<feature type="turn" evidence="22">
    <location>
        <begin position="312"/>
        <end position="314"/>
    </location>
</feature>
<feature type="helix" evidence="21">
    <location>
        <begin position="316"/>
        <end position="321"/>
    </location>
</feature>
<feature type="strand" evidence="21">
    <location>
        <begin position="323"/>
        <end position="325"/>
    </location>
</feature>
<feature type="strand" evidence="21">
    <location>
        <begin position="336"/>
        <end position="339"/>
    </location>
</feature>
<feature type="helix" evidence="21">
    <location>
        <begin position="340"/>
        <end position="344"/>
    </location>
</feature>
<feature type="helix" evidence="21">
    <location>
        <begin position="351"/>
        <end position="356"/>
    </location>
</feature>
<feature type="helix" evidence="21">
    <location>
        <begin position="358"/>
        <end position="380"/>
    </location>
</feature>
<feature type="turn" evidence="21">
    <location>
        <begin position="381"/>
        <end position="384"/>
    </location>
</feature>
<feature type="helix" evidence="21">
    <location>
        <begin position="387"/>
        <end position="397"/>
    </location>
</feature>
<feature type="strand" evidence="21">
    <location>
        <begin position="399"/>
        <end position="401"/>
    </location>
</feature>
<feature type="helix" evidence="20">
    <location>
        <begin position="406"/>
        <end position="408"/>
    </location>
</feature>
<feature type="helix" evidence="21">
    <location>
        <begin position="410"/>
        <end position="437"/>
    </location>
</feature>
<feature type="helix" evidence="21">
    <location>
        <begin position="443"/>
        <end position="467"/>
    </location>
</feature>
<dbReference type="EMBL" id="AF077032">
    <property type="protein sequence ID" value="AAD27765.1"/>
    <property type="molecule type" value="mRNA"/>
</dbReference>
<dbReference type="EMBL" id="AF084458">
    <property type="protein sequence ID" value="AAD39847.1"/>
    <property type="molecule type" value="mRNA"/>
</dbReference>
<dbReference type="EMBL" id="AF346602">
    <property type="protein sequence ID" value="AAK29083.1"/>
    <property type="molecule type" value="mRNA"/>
</dbReference>
<dbReference type="EMBL" id="AK074907">
    <property type="protein sequence ID" value="BAC11283.1"/>
    <property type="status" value="ALT_INIT"/>
    <property type="molecule type" value="mRNA"/>
</dbReference>
<dbReference type="EMBL" id="AK074928">
    <property type="protein sequence ID" value="BAC11298.1"/>
    <property type="molecule type" value="mRNA"/>
</dbReference>
<dbReference type="EMBL" id="AK075148">
    <property type="protein sequence ID" value="BAC11434.1"/>
    <property type="status" value="ALT_INIT"/>
    <property type="molecule type" value="mRNA"/>
</dbReference>
<dbReference type="EMBL" id="AL831940">
    <property type="protein sequence ID" value="CAD38592.1"/>
    <property type="molecule type" value="mRNA"/>
</dbReference>
<dbReference type="EMBL" id="AL832821">
    <property type="protein sequence ID" value="CAI46127.1"/>
    <property type="molecule type" value="mRNA"/>
</dbReference>
<dbReference type="CCDS" id="CCDS3046.1">
    <molecule id="P61619-1"/>
</dbReference>
<dbReference type="RefSeq" id="NP_037468.1">
    <molecule id="P61619-1"/>
    <property type="nucleotide sequence ID" value="NM_013336.4"/>
</dbReference>
<dbReference type="PDB" id="6W6L">
    <property type="method" value="EM"/>
    <property type="resolution" value="3.84 A"/>
    <property type="chains" value="1=1-476"/>
</dbReference>
<dbReference type="PDB" id="8B6L">
    <property type="method" value="EM"/>
    <property type="resolution" value="7.60 A"/>
    <property type="chains" value="A=1-476"/>
</dbReference>
<dbReference type="PDB" id="8DNV">
    <property type="method" value="EM"/>
    <property type="resolution" value="3.03 A"/>
    <property type="chains" value="A=1-476"/>
</dbReference>
<dbReference type="PDB" id="8DNW">
    <property type="method" value="EM"/>
    <property type="resolution" value="3.40 A"/>
    <property type="chains" value="A=1-476"/>
</dbReference>
<dbReference type="PDB" id="8DNX">
    <property type="method" value="EM"/>
    <property type="resolution" value="2.98 A"/>
    <property type="chains" value="A=1-476"/>
</dbReference>
<dbReference type="PDB" id="8DNY">
    <property type="method" value="EM"/>
    <property type="resolution" value="2.85 A"/>
    <property type="chains" value="A=1-476"/>
</dbReference>
<dbReference type="PDB" id="8DNZ">
    <property type="method" value="EM"/>
    <property type="resolution" value="2.57 A"/>
    <property type="chains" value="A=1-476"/>
</dbReference>
<dbReference type="PDB" id="8DO0">
    <property type="method" value="EM"/>
    <property type="resolution" value="2.86 A"/>
    <property type="chains" value="A=1-476"/>
</dbReference>
<dbReference type="PDB" id="8DO1">
    <property type="method" value="EM"/>
    <property type="resolution" value="3.01 A"/>
    <property type="chains" value="A=1-476"/>
</dbReference>
<dbReference type="PDB" id="8DO2">
    <property type="method" value="EM"/>
    <property type="resolution" value="2.95 A"/>
    <property type="chains" value="A=1-476"/>
</dbReference>
<dbReference type="PDB" id="8DO3">
    <property type="method" value="EM"/>
    <property type="resolution" value="3.22 A"/>
    <property type="chains" value="A=1-476"/>
</dbReference>
<dbReference type="PDBsum" id="6W6L"/>
<dbReference type="PDBsum" id="8B6L"/>
<dbReference type="PDBsum" id="8DNV"/>
<dbReference type="PDBsum" id="8DNW"/>
<dbReference type="PDBsum" id="8DNX"/>
<dbReference type="PDBsum" id="8DNY"/>
<dbReference type="PDBsum" id="8DNZ"/>
<dbReference type="PDBsum" id="8DO0"/>
<dbReference type="PDBsum" id="8DO1"/>
<dbReference type="PDBsum" id="8DO2"/>
<dbReference type="PDBsum" id="8DO3"/>
<dbReference type="EMDB" id="EMD-15870"/>
<dbReference type="EMDB" id="EMD-27581"/>
<dbReference type="EMDB" id="EMD-27582"/>
<dbReference type="EMDB" id="EMD-27583"/>
<dbReference type="EMDB" id="EMD-27584"/>
<dbReference type="EMDB" id="EMD-27585"/>
<dbReference type="EMDB" id="EMD-27586"/>
<dbReference type="EMDB" id="EMD-27587"/>
<dbReference type="EMDB" id="EMD-27588"/>
<dbReference type="EMDB" id="EMD-27589"/>
<dbReference type="EMDB" id="EMD-29608"/>
<dbReference type="EMDB" id="EMD-29609"/>
<dbReference type="EMDB" id="EMD-29610"/>
<dbReference type="EMDB" id="EMD-29611"/>
<dbReference type="EMDB" id="EMD-29612"/>
<dbReference type="EMDB" id="EMD-29613"/>
<dbReference type="EMDB" id="EMD-29614"/>
<dbReference type="EMDB" id="EMD-29616"/>
<dbReference type="EMDB" id="EMD-29617"/>
<dbReference type="EMDB" id="EMD-29635"/>
<dbReference type="SMR" id="P61619"/>
<dbReference type="BioGRID" id="118968">
    <property type="interactions" value="243"/>
</dbReference>
<dbReference type="ComplexPortal" id="CPX-8073">
    <property type="entry name" value="SEC61 protein-conducting channel complex, SEC1A1 variant"/>
</dbReference>
<dbReference type="FunCoup" id="P61619">
    <property type="interactions" value="1582"/>
</dbReference>
<dbReference type="IntAct" id="P61619">
    <property type="interactions" value="103"/>
</dbReference>
<dbReference type="MINT" id="P61619"/>
<dbReference type="STRING" id="9606.ENSP00000243253"/>
<dbReference type="TCDB" id="3.A.5.9.1">
    <property type="family name" value="the general secretory pathway (sec) family"/>
</dbReference>
<dbReference type="GlyGen" id="P61619">
    <property type="glycosylation" value="1 site, 1 O-linked glycan (1 site)"/>
</dbReference>
<dbReference type="iPTMnet" id="P61619"/>
<dbReference type="MetOSite" id="P61619"/>
<dbReference type="PhosphoSitePlus" id="P61619"/>
<dbReference type="SwissPalm" id="P61619"/>
<dbReference type="BioMuta" id="SEC61A1"/>
<dbReference type="DMDM" id="48429109"/>
<dbReference type="jPOST" id="P61619"/>
<dbReference type="MassIVE" id="P61619"/>
<dbReference type="PaxDb" id="9606-ENSP00000243253"/>
<dbReference type="PeptideAtlas" id="P61619"/>
<dbReference type="ProteomicsDB" id="57326">
    <molecule id="P61619-1"/>
</dbReference>
<dbReference type="ProteomicsDB" id="57327">
    <molecule id="P61619-3"/>
</dbReference>
<dbReference type="Pumba" id="P61619"/>
<dbReference type="Antibodypedia" id="17274">
    <property type="antibodies" value="175 antibodies from 33 providers"/>
</dbReference>
<dbReference type="DNASU" id="29927"/>
<dbReference type="Ensembl" id="ENST00000243253.8">
    <molecule id="P61619-1"/>
    <property type="protein sequence ID" value="ENSP00000243253.3"/>
    <property type="gene ID" value="ENSG00000058262.11"/>
</dbReference>
<dbReference type="Ensembl" id="ENST00000424880.2">
    <molecule id="P61619-3"/>
    <property type="protein sequence ID" value="ENSP00000411445.2"/>
    <property type="gene ID" value="ENSG00000058262.11"/>
</dbReference>
<dbReference type="GeneID" id="29927"/>
<dbReference type="KEGG" id="hsa:29927"/>
<dbReference type="MANE-Select" id="ENST00000243253.8">
    <property type="protein sequence ID" value="ENSP00000243253.3"/>
    <property type="RefSeq nucleotide sequence ID" value="NM_013336.4"/>
    <property type="RefSeq protein sequence ID" value="NP_037468.1"/>
</dbReference>
<dbReference type="UCSC" id="uc003ekb.4">
    <molecule id="P61619-1"/>
    <property type="organism name" value="human"/>
</dbReference>
<dbReference type="AGR" id="HGNC:18276"/>
<dbReference type="CTD" id="29927"/>
<dbReference type="DisGeNET" id="29927"/>
<dbReference type="GeneCards" id="SEC61A1"/>
<dbReference type="HGNC" id="HGNC:18276">
    <property type="gene designation" value="SEC61A1"/>
</dbReference>
<dbReference type="HPA" id="ENSG00000058262">
    <property type="expression patterns" value="Low tissue specificity"/>
</dbReference>
<dbReference type="MalaCards" id="SEC61A1"/>
<dbReference type="MIM" id="609213">
    <property type="type" value="gene"/>
</dbReference>
<dbReference type="MIM" id="617056">
    <property type="type" value="phenotype"/>
</dbReference>
<dbReference type="MIM" id="620670">
    <property type="type" value="phenotype"/>
</dbReference>
<dbReference type="MIM" id="620674">
    <property type="type" value="phenotype"/>
</dbReference>
<dbReference type="neXtProt" id="NX_P61619"/>
<dbReference type="OpenTargets" id="ENSG00000058262"/>
<dbReference type="PharmGKB" id="PA134901772"/>
<dbReference type="VEuPathDB" id="HostDB:ENSG00000058262"/>
<dbReference type="eggNOG" id="KOG1373">
    <property type="taxonomic scope" value="Eukaryota"/>
</dbReference>
<dbReference type="GeneTree" id="ENSGT00390000003721"/>
<dbReference type="HOGENOM" id="CLU_031763_2_0_1"/>
<dbReference type="InParanoid" id="P61619"/>
<dbReference type="OMA" id="PMMRQMF"/>
<dbReference type="OrthoDB" id="420669at2759"/>
<dbReference type="PAN-GO" id="P61619">
    <property type="GO annotations" value="6 GO annotations based on evolutionary models"/>
</dbReference>
<dbReference type="PhylomeDB" id="P61619"/>
<dbReference type="TreeFam" id="TF300348"/>
<dbReference type="PathwayCommons" id="P61619"/>
<dbReference type="Reactome" id="R-HSA-1236974">
    <property type="pathway name" value="ER-Phagosome pathway"/>
</dbReference>
<dbReference type="Reactome" id="R-HSA-1799339">
    <property type="pathway name" value="SRP-dependent cotranslational protein targeting to membrane"/>
</dbReference>
<dbReference type="SignaLink" id="P61619"/>
<dbReference type="SIGNOR" id="P61619"/>
<dbReference type="BioGRID-ORCS" id="29927">
    <property type="hits" value="784 hits in 1165 CRISPR screens"/>
</dbReference>
<dbReference type="ChiTaRS" id="SEC61A1">
    <property type="organism name" value="human"/>
</dbReference>
<dbReference type="GeneWiki" id="Sec61_alpha_1"/>
<dbReference type="GenomeRNAi" id="29927"/>
<dbReference type="Pharos" id="P61619">
    <property type="development level" value="Tbio"/>
</dbReference>
<dbReference type="PRO" id="PR:P61619"/>
<dbReference type="Proteomes" id="UP000005640">
    <property type="component" value="Chromosome 3"/>
</dbReference>
<dbReference type="RNAct" id="P61619">
    <property type="molecule type" value="protein"/>
</dbReference>
<dbReference type="Bgee" id="ENSG00000058262">
    <property type="expression patterns" value="Expressed in body of pancreas and 198 other cell types or tissues"/>
</dbReference>
<dbReference type="ExpressionAtlas" id="P61619">
    <property type="expression patterns" value="baseline and differential"/>
</dbReference>
<dbReference type="GO" id="GO:0005789">
    <property type="term" value="C:endoplasmic reticulum membrane"/>
    <property type="evidence" value="ECO:0000314"/>
    <property type="project" value="UniProtKB"/>
</dbReference>
<dbReference type="GO" id="GO:0016020">
    <property type="term" value="C:membrane"/>
    <property type="evidence" value="ECO:0000314"/>
    <property type="project" value="MGI"/>
</dbReference>
<dbReference type="GO" id="GO:0005784">
    <property type="term" value="C:Sec61 translocon complex"/>
    <property type="evidence" value="ECO:0000314"/>
    <property type="project" value="UniProtKB"/>
</dbReference>
<dbReference type="GO" id="GO:0005262">
    <property type="term" value="F:calcium channel activity"/>
    <property type="evidence" value="ECO:0000315"/>
    <property type="project" value="UniProtKB"/>
</dbReference>
<dbReference type="GO" id="GO:0008320">
    <property type="term" value="F:protein transmembrane transporter activity"/>
    <property type="evidence" value="ECO:0000318"/>
    <property type="project" value="GO_Central"/>
</dbReference>
<dbReference type="GO" id="GO:0043022">
    <property type="term" value="F:ribosome binding"/>
    <property type="evidence" value="ECO:0000314"/>
    <property type="project" value="UniProtKB"/>
</dbReference>
<dbReference type="GO" id="GO:0005048">
    <property type="term" value="F:signal sequence binding"/>
    <property type="evidence" value="ECO:0000318"/>
    <property type="project" value="GO_Central"/>
</dbReference>
<dbReference type="GO" id="GO:0006613">
    <property type="term" value="P:cotranslational protein targeting to membrane"/>
    <property type="evidence" value="ECO:0000314"/>
    <property type="project" value="UniProtKB"/>
</dbReference>
<dbReference type="GO" id="GO:0007029">
    <property type="term" value="P:endoplasmic reticulum organization"/>
    <property type="evidence" value="ECO:0000315"/>
    <property type="project" value="MGI"/>
</dbReference>
<dbReference type="GO" id="GO:0006620">
    <property type="term" value="P:post-translational protein targeting to endoplasmic reticulum membrane"/>
    <property type="evidence" value="ECO:0000315"/>
    <property type="project" value="MGI"/>
</dbReference>
<dbReference type="GO" id="GO:0031204">
    <property type="term" value="P:post-translational protein targeting to membrane, translocation"/>
    <property type="evidence" value="ECO:0000315"/>
    <property type="project" value="UniProtKB"/>
</dbReference>
<dbReference type="GO" id="GO:0039019">
    <property type="term" value="P:pronephric nephron development"/>
    <property type="evidence" value="ECO:0000250"/>
    <property type="project" value="UniProtKB"/>
</dbReference>
<dbReference type="GO" id="GO:0045048">
    <property type="term" value="P:protein insertion into ER membrane"/>
    <property type="evidence" value="ECO:0000314"/>
    <property type="project" value="UniProtKB"/>
</dbReference>
<dbReference type="GO" id="GO:0045047">
    <property type="term" value="P:protein targeting to ER"/>
    <property type="evidence" value="ECO:0000250"/>
    <property type="project" value="UniProtKB"/>
</dbReference>
<dbReference type="GO" id="GO:0034341">
    <property type="term" value="P:response to type II interferon"/>
    <property type="evidence" value="ECO:0007669"/>
    <property type="project" value="Ensembl"/>
</dbReference>
<dbReference type="GO" id="GO:0006614">
    <property type="term" value="P:SRP-dependent cotranslational protein targeting to membrane"/>
    <property type="evidence" value="ECO:0000315"/>
    <property type="project" value="MGI"/>
</dbReference>
<dbReference type="GO" id="GO:0006616">
    <property type="term" value="P:SRP-dependent cotranslational protein targeting to membrane, translocation"/>
    <property type="evidence" value="ECO:0000318"/>
    <property type="project" value="GO_Central"/>
</dbReference>
<dbReference type="FunFam" id="1.10.3370.10:FF:000002">
    <property type="entry name" value="Transport Sec61 subunit alpha isoform 2"/>
    <property type="match status" value="1"/>
</dbReference>
<dbReference type="Gene3D" id="1.10.3370.10">
    <property type="entry name" value="SecY subunit domain"/>
    <property type="match status" value="1"/>
</dbReference>
<dbReference type="InterPro" id="IPR002208">
    <property type="entry name" value="SecY/SEC61-alpha"/>
</dbReference>
<dbReference type="InterPro" id="IPR030659">
    <property type="entry name" value="SecY_CS"/>
</dbReference>
<dbReference type="InterPro" id="IPR023201">
    <property type="entry name" value="SecY_dom_sf"/>
</dbReference>
<dbReference type="InterPro" id="IPR019561">
    <property type="entry name" value="Translocon_Sec61/SecY_plug_dom"/>
</dbReference>
<dbReference type="NCBIfam" id="TIGR00967">
    <property type="entry name" value="3a0501s007"/>
    <property type="match status" value="1"/>
</dbReference>
<dbReference type="NCBIfam" id="NF006341">
    <property type="entry name" value="PRK08568.1-5"/>
    <property type="match status" value="1"/>
</dbReference>
<dbReference type="PANTHER" id="PTHR10906">
    <property type="entry name" value="SECY/SEC61-ALPHA FAMILY MEMBER"/>
    <property type="match status" value="1"/>
</dbReference>
<dbReference type="Pfam" id="PF10559">
    <property type="entry name" value="Plug_translocon"/>
    <property type="match status" value="1"/>
</dbReference>
<dbReference type="Pfam" id="PF00344">
    <property type="entry name" value="SecY"/>
    <property type="match status" value="1"/>
</dbReference>
<dbReference type="PIRSF" id="PIRSF004557">
    <property type="entry name" value="SecY"/>
    <property type="match status" value="1"/>
</dbReference>
<dbReference type="SUPFAM" id="SSF103491">
    <property type="entry name" value="Preprotein translocase SecY subunit"/>
    <property type="match status" value="1"/>
</dbReference>
<dbReference type="PROSITE" id="PS00755">
    <property type="entry name" value="SECY_1"/>
    <property type="match status" value="1"/>
</dbReference>
<dbReference type="PROSITE" id="PS00756">
    <property type="entry name" value="SECY_2"/>
    <property type="match status" value="1"/>
</dbReference>
<name>S61A1_HUMAN</name>
<evidence type="ECO:0000250" key="1">
    <source>
        <dbReference type="UniProtKB" id="P61620"/>
    </source>
</evidence>
<evidence type="ECO:0000255" key="2"/>
<evidence type="ECO:0000269" key="3">
    <source>
    </source>
</evidence>
<evidence type="ECO:0000269" key="4">
    <source>
    </source>
</evidence>
<evidence type="ECO:0000269" key="5">
    <source>
    </source>
</evidence>
<evidence type="ECO:0000269" key="6">
    <source>
    </source>
</evidence>
<evidence type="ECO:0000269" key="7">
    <source>
    </source>
</evidence>
<evidence type="ECO:0000269" key="8">
    <source>
    </source>
</evidence>
<evidence type="ECO:0000269" key="9">
    <source>
    </source>
</evidence>
<evidence type="ECO:0000269" key="10">
    <source>
    </source>
</evidence>
<evidence type="ECO:0000269" key="11">
    <source>
    </source>
</evidence>
<evidence type="ECO:0000269" key="12">
    <source>
    </source>
</evidence>
<evidence type="ECO:0000269" key="13">
    <source>
    </source>
</evidence>
<evidence type="ECO:0000269" key="14">
    <source>
    </source>
</evidence>
<evidence type="ECO:0000303" key="15">
    <source>
    </source>
</evidence>
<evidence type="ECO:0000305" key="16"/>
<evidence type="ECO:0007744" key="17">
    <source>
        <dbReference type="PDB" id="8B6L"/>
    </source>
</evidence>
<evidence type="ECO:0007829" key="18">
    <source>
        <dbReference type="PDB" id="8DNV"/>
    </source>
</evidence>
<evidence type="ECO:0007829" key="19">
    <source>
        <dbReference type="PDB" id="8DNX"/>
    </source>
</evidence>
<evidence type="ECO:0007829" key="20">
    <source>
        <dbReference type="PDB" id="8DNY"/>
    </source>
</evidence>
<evidence type="ECO:0007829" key="21">
    <source>
        <dbReference type="PDB" id="8DNZ"/>
    </source>
</evidence>
<evidence type="ECO:0007829" key="22">
    <source>
        <dbReference type="PDB" id="8DO1"/>
    </source>
</evidence>
<evidence type="ECO:0007829" key="23">
    <source>
        <dbReference type="PDB" id="8DO2"/>
    </source>
</evidence>
<evidence type="ECO:0007829" key="24">
    <source>
        <dbReference type="PDB" id="8DO3"/>
    </source>
</evidence>
<protein>
    <recommendedName>
        <fullName>Protein transport protein Sec61 subunit alpha isoform 1</fullName>
        <shortName>Sec61 alpha-1</shortName>
    </recommendedName>
</protein>
<reference key="1">
    <citation type="submission" date="1998-07" db="EMBL/GenBank/DDBJ databases">
        <title>Human sec61 homolog gene.</title>
        <authorList>
            <person name="Liu T."/>
            <person name="Zhang J."/>
            <person name="Ye M."/>
            <person name="Zhang Q."/>
            <person name="Fu G."/>
            <person name="Zhou J."/>
            <person name="Wu J."/>
            <person name="Shen Y."/>
            <person name="Yu M."/>
            <person name="Chen S."/>
            <person name="Mao M."/>
            <person name="Chen Z."/>
        </authorList>
    </citation>
    <scope>NUCLEOTIDE SEQUENCE [MRNA]</scope>
</reference>
<reference key="2">
    <citation type="submission" date="1998-08" db="EMBL/GenBank/DDBJ databases">
        <title>Human sec61 homolog gene mRNA sequence.</title>
        <authorList>
            <person name="Li W."/>
            <person name="Liu T."/>
            <person name="Fu G."/>
            <person name="Zhang Q."/>
            <person name="Ye M."/>
            <person name="Zhou J."/>
            <person name="Wu J."/>
            <person name="Shen Y."/>
            <person name="Yu M."/>
            <person name="Chen S."/>
            <person name="Mao M."/>
            <person name="Chen Z."/>
        </authorList>
    </citation>
    <scope>NUCLEOTIDE SEQUENCE [MRNA] (ISOFORM 1)</scope>
</reference>
<reference key="3">
    <citation type="submission" date="2001-02" db="EMBL/GenBank/DDBJ databases">
        <title>Sec61 alpha isoforms.</title>
        <authorList>
            <person name="Finke K."/>
            <person name="Prehn S."/>
            <person name="Hartmann E."/>
        </authorList>
    </citation>
    <scope>NUCLEOTIDE SEQUENCE [MRNA] (ISOFORM 1)</scope>
</reference>
<reference key="4">
    <citation type="journal article" date="2004" name="Nat. Genet.">
        <title>Complete sequencing and characterization of 21,243 full-length human cDNAs.</title>
        <authorList>
            <person name="Ota T."/>
            <person name="Suzuki Y."/>
            <person name="Nishikawa T."/>
            <person name="Otsuki T."/>
            <person name="Sugiyama T."/>
            <person name="Irie R."/>
            <person name="Wakamatsu A."/>
            <person name="Hayashi K."/>
            <person name="Sato H."/>
            <person name="Nagai K."/>
            <person name="Kimura K."/>
            <person name="Makita H."/>
            <person name="Sekine M."/>
            <person name="Obayashi M."/>
            <person name="Nishi T."/>
            <person name="Shibahara T."/>
            <person name="Tanaka T."/>
            <person name="Ishii S."/>
            <person name="Yamamoto J."/>
            <person name="Saito K."/>
            <person name="Kawai Y."/>
            <person name="Isono Y."/>
            <person name="Nakamura Y."/>
            <person name="Nagahari K."/>
            <person name="Murakami K."/>
            <person name="Yasuda T."/>
            <person name="Iwayanagi T."/>
            <person name="Wagatsuma M."/>
            <person name="Shiratori A."/>
            <person name="Sudo H."/>
            <person name="Hosoiri T."/>
            <person name="Kaku Y."/>
            <person name="Kodaira H."/>
            <person name="Kondo H."/>
            <person name="Sugawara M."/>
            <person name="Takahashi M."/>
            <person name="Kanda K."/>
            <person name="Yokoi T."/>
            <person name="Furuya T."/>
            <person name="Kikkawa E."/>
            <person name="Omura Y."/>
            <person name="Abe K."/>
            <person name="Kamihara K."/>
            <person name="Katsuta N."/>
            <person name="Sato K."/>
            <person name="Tanikawa M."/>
            <person name="Yamazaki M."/>
            <person name="Ninomiya K."/>
            <person name="Ishibashi T."/>
            <person name="Yamashita H."/>
            <person name="Murakawa K."/>
            <person name="Fujimori K."/>
            <person name="Tanai H."/>
            <person name="Kimata M."/>
            <person name="Watanabe M."/>
            <person name="Hiraoka S."/>
            <person name="Chiba Y."/>
            <person name="Ishida S."/>
            <person name="Ono Y."/>
            <person name="Takiguchi S."/>
            <person name="Watanabe S."/>
            <person name="Yosida M."/>
            <person name="Hotuta T."/>
            <person name="Kusano J."/>
            <person name="Kanehori K."/>
            <person name="Takahashi-Fujii A."/>
            <person name="Hara H."/>
            <person name="Tanase T.-O."/>
            <person name="Nomura Y."/>
            <person name="Togiya S."/>
            <person name="Komai F."/>
            <person name="Hara R."/>
            <person name="Takeuchi K."/>
            <person name="Arita M."/>
            <person name="Imose N."/>
            <person name="Musashino K."/>
            <person name="Yuuki H."/>
            <person name="Oshima A."/>
            <person name="Sasaki N."/>
            <person name="Aotsuka S."/>
            <person name="Yoshikawa Y."/>
            <person name="Matsunawa H."/>
            <person name="Ichihara T."/>
            <person name="Shiohata N."/>
            <person name="Sano S."/>
            <person name="Moriya S."/>
            <person name="Momiyama H."/>
            <person name="Satoh N."/>
            <person name="Takami S."/>
            <person name="Terashima Y."/>
            <person name="Suzuki O."/>
            <person name="Nakagawa S."/>
            <person name="Senoh A."/>
            <person name="Mizoguchi H."/>
            <person name="Goto Y."/>
            <person name="Shimizu F."/>
            <person name="Wakebe H."/>
            <person name="Hishigaki H."/>
            <person name="Watanabe T."/>
            <person name="Sugiyama A."/>
            <person name="Takemoto M."/>
            <person name="Kawakami B."/>
            <person name="Yamazaki M."/>
            <person name="Watanabe K."/>
            <person name="Kumagai A."/>
            <person name="Itakura S."/>
            <person name="Fukuzumi Y."/>
            <person name="Fujimori Y."/>
            <person name="Komiyama M."/>
            <person name="Tashiro H."/>
            <person name="Tanigami A."/>
            <person name="Fujiwara T."/>
            <person name="Ono T."/>
            <person name="Yamada K."/>
            <person name="Fujii Y."/>
            <person name="Ozaki K."/>
            <person name="Hirao M."/>
            <person name="Ohmori Y."/>
            <person name="Kawabata A."/>
            <person name="Hikiji T."/>
            <person name="Kobatake N."/>
            <person name="Inagaki H."/>
            <person name="Ikema Y."/>
            <person name="Okamoto S."/>
            <person name="Okitani R."/>
            <person name="Kawakami T."/>
            <person name="Noguchi S."/>
            <person name="Itoh T."/>
            <person name="Shigeta K."/>
            <person name="Senba T."/>
            <person name="Matsumura K."/>
            <person name="Nakajima Y."/>
            <person name="Mizuno T."/>
            <person name="Morinaga M."/>
            <person name="Sasaki M."/>
            <person name="Togashi T."/>
            <person name="Oyama M."/>
            <person name="Hata H."/>
            <person name="Watanabe M."/>
            <person name="Komatsu T."/>
            <person name="Mizushima-Sugano J."/>
            <person name="Satoh T."/>
            <person name="Shirai Y."/>
            <person name="Takahashi Y."/>
            <person name="Nakagawa K."/>
            <person name="Okumura K."/>
            <person name="Nagase T."/>
            <person name="Nomura N."/>
            <person name="Kikuchi H."/>
            <person name="Masuho Y."/>
            <person name="Yamashita R."/>
            <person name="Nakai K."/>
            <person name="Yada T."/>
            <person name="Nakamura Y."/>
            <person name="Ohara O."/>
            <person name="Isogai T."/>
            <person name="Sugano S."/>
        </authorList>
    </citation>
    <scope>NUCLEOTIDE SEQUENCE [LARGE SCALE MRNA] (ISOFORM 3)</scope>
    <source>
        <tissue>Placenta</tissue>
        <tissue>Teratocarcinoma</tissue>
    </source>
</reference>
<reference key="5">
    <citation type="journal article" date="2007" name="BMC Genomics">
        <title>The full-ORF clone resource of the German cDNA consortium.</title>
        <authorList>
            <person name="Bechtel S."/>
            <person name="Rosenfelder H."/>
            <person name="Duda A."/>
            <person name="Schmidt C.P."/>
            <person name="Ernst U."/>
            <person name="Wellenreuther R."/>
            <person name="Mehrle A."/>
            <person name="Schuster C."/>
            <person name="Bahr A."/>
            <person name="Bloecker H."/>
            <person name="Heubner D."/>
            <person name="Hoerlein A."/>
            <person name="Michel G."/>
            <person name="Wedler H."/>
            <person name="Koehrer K."/>
            <person name="Ottenwaelder B."/>
            <person name="Poustka A."/>
            <person name="Wiemann S."/>
            <person name="Schupp I."/>
        </authorList>
    </citation>
    <scope>NUCLEOTIDE SEQUENCE [LARGE SCALE MRNA] (ISOFORM 1)</scope>
    <source>
        <tissue>Bone marrow</tissue>
        <tissue>Lymph node</tissue>
    </source>
</reference>
<reference key="6">
    <citation type="journal article" date="1996" name="Cell">
        <title>The cotranslational integration of membrane proteins into the phospholipid bilayer is a multistep process.</title>
        <authorList>
            <person name="Do H."/>
            <person name="Falcone D."/>
            <person name="Lin J."/>
            <person name="Andrews D.W."/>
            <person name="Johnson A.E."/>
        </authorList>
    </citation>
    <scope>FUNCTION</scope>
</reference>
<reference key="7">
    <citation type="journal article" date="2002" name="Mol. Biol. Cell">
        <title>Different transmembrane domains associate with distinct endoplasmic reticulum components during membrane integration of a polytopic protein.</title>
        <authorList>
            <person name="Meacock S.L."/>
            <person name="Lecomte F.J."/>
            <person name="Crawshaw S.G."/>
            <person name="High S."/>
        </authorList>
    </citation>
    <scope>FUNCTION</scope>
    <scope>SUBCELLULAR LOCATION</scope>
</reference>
<reference key="8">
    <citation type="journal article" date="2011" name="BMC Syst. Biol.">
        <title>Initial characterization of the human central proteome.</title>
        <authorList>
            <person name="Burkard T.R."/>
            <person name="Planyavsky M."/>
            <person name="Kaupe I."/>
            <person name="Breitwieser F.P."/>
            <person name="Buerckstuemmer T."/>
            <person name="Bennett K.L."/>
            <person name="Superti-Furga G."/>
            <person name="Colinge J."/>
        </authorList>
    </citation>
    <scope>IDENTIFICATION BY MASS SPECTROMETRY [LARGE SCALE ANALYSIS]</scope>
</reference>
<reference key="9">
    <citation type="journal article" date="2012" name="J. Cell Sci.">
        <title>Different effects of Sec61alpha, Sec62 and Sec63 depletion on transport of polypeptides into the endoplasmic reticulum of mammalian cells.</title>
        <authorList>
            <person name="Lang S."/>
            <person name="Benedix J."/>
            <person name="Fedeles S.V."/>
            <person name="Schorr S."/>
            <person name="Schirra C."/>
            <person name="Schaeuble N."/>
            <person name="Jalal C."/>
            <person name="Greiner M."/>
            <person name="Hassdenteufel S."/>
            <person name="Tatzelt J."/>
            <person name="Kreutzer B."/>
            <person name="Edelmann L."/>
            <person name="Krause E."/>
            <person name="Rettig J."/>
            <person name="Somlo S."/>
            <person name="Zimmermann R."/>
            <person name="Dudek J."/>
        </authorList>
    </citation>
    <scope>FUNCTION</scope>
</reference>
<reference key="10">
    <citation type="journal article" date="2013" name="J. Proteome Res.">
        <title>Toward a comprehensive characterization of a human cancer cell phosphoproteome.</title>
        <authorList>
            <person name="Zhou H."/>
            <person name="Di Palma S."/>
            <person name="Preisinger C."/>
            <person name="Peng M."/>
            <person name="Polat A.N."/>
            <person name="Heck A.J."/>
            <person name="Mohammed S."/>
        </authorList>
    </citation>
    <scope>IDENTIFICATION BY MASS SPECTROMETRY [LARGE SCALE ANALYSIS]</scope>
    <source>
        <tissue>Erythroleukemia</tissue>
    </source>
</reference>
<reference key="11">
    <citation type="journal article" date="2015" name="Proteomics">
        <title>N-terminome analysis of the human mitochondrial proteome.</title>
        <authorList>
            <person name="Vaca Jacome A.S."/>
            <person name="Rabilloud T."/>
            <person name="Schaeffer-Reiss C."/>
            <person name="Rompais M."/>
            <person name="Ayoub D."/>
            <person name="Lane L."/>
            <person name="Bairoch A."/>
            <person name="Van Dorsselaer A."/>
            <person name="Carapito C."/>
        </authorList>
    </citation>
    <scope>IDENTIFICATION BY MASS SPECTROMETRY [LARGE SCALE ANALYSIS]</scope>
</reference>
<reference key="12">
    <citation type="journal article" date="2018" name="Cell Rep.">
        <title>Chaperone-Mediated Sec61 Channel Gating during ER Import of Small Precursor Proteins Overcomes Sec61 Inhibitor-Reinforced Energy Barrier.</title>
        <authorList>
            <person name="Hassdenteufel S."/>
            <person name="Johnson N."/>
            <person name="Paton A.W."/>
            <person name="Paton J.C."/>
            <person name="High S."/>
            <person name="Zimmermann R."/>
        </authorList>
    </citation>
    <scope>FUNCTION</scope>
    <scope>MUTAGENESIS OF TYR-344</scope>
</reference>
<reference key="13">
    <citation type="journal article" date="2020" name="Nature">
        <title>An intramembrane chaperone complex facilitates membrane protein biogenesis.</title>
        <authorList>
            <person name="Chitwood P.J."/>
            <person name="Hegde R.S."/>
        </authorList>
    </citation>
    <scope>FUNCTION</scope>
    <scope>SUBCELLULAR LOCATION</scope>
</reference>
<reference key="14">
    <citation type="journal article" date="2020" name="Elife">
        <title>An ER translocon for multi-pass membrane protein biogenesis.</title>
        <authorList>
            <person name="McGilvray P.T."/>
            <person name="Anghel S.A."/>
            <person name="Sundaram A."/>
            <person name="Zhong F."/>
            <person name="Trnka M.J."/>
            <person name="Fuller J.R."/>
            <person name="Hu H."/>
            <person name="Burlingame A.L."/>
            <person name="Keenan R.J."/>
        </authorList>
    </citation>
    <scope>FUNCTION</scope>
    <scope>INTERACTION WITH TMCO1; CCDC47; NCLN; NOMO; TMEM147; SEC61A1 AND SEC61B</scope>
</reference>
<reference key="15">
    <citation type="journal article" date="2022" name="Nature">
        <title>Substrate-driven assembly of a translocon for multipass membrane proteins.</title>
        <authorList>
            <person name="Sundaram A."/>
            <person name="Yamsek M."/>
            <person name="Zhong F."/>
            <person name="Hooda Y."/>
            <person name="Hegde R.S."/>
            <person name="Keenan R.J."/>
        </authorList>
    </citation>
    <scope>FUNCTION</scope>
    <scope>INTERACTION WITH THE MULTI-PASS TRANSLOCON COMPLEX</scope>
    <scope>SUBCELLULAR LOCATION</scope>
</reference>
<reference evidence="17" key="16">
    <citation type="journal article" date="2023" name="Nature">
        <title>Visualization of translation and protein biogenesis at the ER membrane.</title>
        <authorList>
            <person name="Gemmer M."/>
            <person name="Chaillet M.L."/>
            <person name="van Loenhout J."/>
            <person name="Cuevas Arenas R."/>
            <person name="Vismpas D."/>
            <person name="Grollers-Mulderij M."/>
            <person name="Koh F.A."/>
            <person name="Albanese P."/>
            <person name="Scheltema R.A."/>
            <person name="Howes S.C."/>
            <person name="Kotecha A."/>
            <person name="Fedry J."/>
            <person name="Forster F."/>
        </authorList>
    </citation>
    <scope>STRUCTURE BY ELECTRON MICROSCOPY (7.60 ANGSTROMS) OF THE STT3A-CONTAINING OLIGOSACCHARYLTRANSFERASE (OST) AND TRANSLOCON COMPLEXES</scope>
    <scope>SUBUNIT</scope>
</reference>
<reference key="17">
    <citation type="journal article" date="2016" name="Am. J. Hum. Genet.">
        <title>Heterozygous loss-of-function SEC61A1 mutations cause autosomal-dominant tubulo-interstitial and glomerulocystic kidney disease with anemia.</title>
        <authorList>
            <person name="Bolar N.A."/>
            <person name="Golzio C."/>
            <person name="Zivna M."/>
            <person name="Hayot G."/>
            <person name="Van Hemelrijk C."/>
            <person name="Schepers D."/>
            <person name="Vandeweyer G."/>
            <person name="Hoischen A."/>
            <person name="Huyghe J.R."/>
            <person name="Raes A."/>
            <person name="Matthys E."/>
            <person name="Sys E."/>
            <person name="Azou M."/>
            <person name="Gubler M.C."/>
            <person name="Praet M."/>
            <person name="Van Camp G."/>
            <person name="McFadden K."/>
            <person name="Pediaditakis I."/>
            <person name="Pristoupilova A."/>
            <person name="Hodanova K."/>
            <person name="Vyletal P."/>
            <person name="Hartmannova H."/>
            <person name="Stranecky V."/>
            <person name="Hulkova H."/>
            <person name="Baresova V."/>
            <person name="Jedlickova I."/>
            <person name="Sovova J."/>
            <person name="Hnizda A."/>
            <person name="Kidd K."/>
            <person name="Bleyer A.J."/>
            <person name="Spong R.S."/>
            <person name="Vande Walle J."/>
            <person name="Mortier G."/>
            <person name="Brunner H."/>
            <person name="Van Laer L."/>
            <person name="Kmoch S."/>
            <person name="Katsanis N."/>
            <person name="Loeys B.L."/>
        </authorList>
    </citation>
    <scope>VARIANTS ADTKD5 GLY-67 AND ALA-185</scope>
    <scope>CHARACTERIZATION OF VARIANTS ADTKD5 GLY-67 AND ALA-185</scope>
    <scope>INVOLVEMENT IN ADTKD5</scope>
    <scope>SUBCELLULAR LOCATION</scope>
    <scope>TISSUE SPECIFICITY</scope>
</reference>
<reference key="18">
    <citation type="journal article" date="2018" name="J. Allergy Clin. Immunol.">
        <title>Plasma cell deficiency in human subjects with heterozygous mutations in Sec61 translocon alpha 1 subunit (SEC61A1).</title>
        <authorList>
            <person name="Schubert D."/>
            <person name="Klein M.C."/>
            <person name="Hassdenteufel S."/>
            <person name="Caballero-Oteyza A."/>
            <person name="Yang L."/>
            <person name="Proietti M."/>
            <person name="Bulashevska A."/>
            <person name="Kemming J."/>
            <person name="Kuehn J."/>
            <person name="Winzer S."/>
            <person name="Rusch S."/>
            <person name="Fliegauf M."/>
            <person name="Schaeffer A.A."/>
            <person name="Pfeffer S."/>
            <person name="Geiger R."/>
            <person name="Cavalie A."/>
            <person name="Cao H."/>
            <person name="Yang F."/>
            <person name="Li Y."/>
            <person name="Rizzi M."/>
            <person name="Eibel H."/>
            <person name="Kobbe R."/>
            <person name="Marks A.L."/>
            <person name="Peppers B.P."/>
            <person name="Hostoffer R.W."/>
            <person name="Puck J.M."/>
            <person name="Zimmermann R."/>
            <person name="Grimbacher B."/>
        </authorList>
    </citation>
    <scope>VARIANTS CVID15 ASP-85 AND 381-GLU--PHE-476 DEL</scope>
    <scope>CHARACTERIZATION OF VARIANT CVID15 ASP-85</scope>
    <scope>INVOLVEMENT IN CVID15</scope>
    <scope>FUNCTION</scope>
</reference>
<reference key="19">
    <citation type="journal article" date="2020" name="J. Allergy Clin. Immunol.">
        <title>Defective Sec61alpha1 underlies a novel cause of autosomal dominant severe congenital neutropenia.</title>
        <authorList>
            <person name="Van Nieuwenhove E."/>
            <person name="Barber J.S."/>
            <person name="Neumann J."/>
            <person name="Smeets E."/>
            <person name="Willemsen M."/>
            <person name="Pasciuto E."/>
            <person name="Prezzemolo T."/>
            <person name="Lagou V."/>
            <person name="Seldeslachts L."/>
            <person name="Malengier-Devlies B."/>
            <person name="Metzemaekers M."/>
            <person name="Hassdenteufel S."/>
            <person name="Kerstens A."/>
            <person name="van der Kant R."/>
            <person name="Rousseau F."/>
            <person name="Schymkowitz J."/>
            <person name="Di Marino D."/>
            <person name="Lang S."/>
            <person name="Zimmermann R."/>
            <person name="Schlenner S."/>
            <person name="Munck S."/>
            <person name="Proost P."/>
            <person name="Matthys P."/>
            <person name="Devalck C."/>
            <person name="Boeckx N."/>
            <person name="Claessens F."/>
            <person name="Wouters C."/>
            <person name="Humblet-Baron S."/>
            <person name="Meyts I."/>
            <person name="Liston A."/>
        </authorList>
    </citation>
    <scope>VARIANT SCN11 ARG-92</scope>
    <scope>CHARACTERIZATION OF VARIANT SCN11 ARG-92</scope>
    <scope>INVOLVEMENT IN SCN11</scope>
    <scope>SUBCELLULAR LOCATION</scope>
</reference>
<reference key="20">
    <citation type="journal article" date="2021" name="J. Paediatr. Child Health">
        <title>De novo SEC61A1 mutation in autosomal dominant tubulo-interstitial kidney disease: Phenotype expansion and review of literature.</title>
        <authorList>
            <person name="Espino-Hernandez M."/>
            <person name="Palma Milla C."/>
            <person name="Vara-Martin J."/>
            <person name="Gonzalez-Granado L.I."/>
        </authorList>
    </citation>
    <scope>VARIANT ADTKD5 ALA-185</scope>
    <scope>INVOLVEMENT IN ADTKD5</scope>
</reference>
<proteinExistence type="evidence at protein level"/>
<gene>
    <name type="primary">SEC61A1</name>
    <name type="synonym">SEC61A</name>
</gene>